<comment type="function">
    <text evidence="1">Catalyzes the attachment of valine to tRNA(Val). As ValRS can inadvertently accommodate and process structurally similar amino acids such as threonine, to avoid such errors, it has a 'posttransfer' editing activity that hydrolyzes mischarged Thr-tRNA(Val) in a tRNA-dependent manner.</text>
</comment>
<comment type="catalytic activity">
    <reaction evidence="1">
        <text>tRNA(Val) + L-valine + ATP = L-valyl-tRNA(Val) + AMP + diphosphate</text>
        <dbReference type="Rhea" id="RHEA:10704"/>
        <dbReference type="Rhea" id="RHEA-COMP:9672"/>
        <dbReference type="Rhea" id="RHEA-COMP:9708"/>
        <dbReference type="ChEBI" id="CHEBI:30616"/>
        <dbReference type="ChEBI" id="CHEBI:33019"/>
        <dbReference type="ChEBI" id="CHEBI:57762"/>
        <dbReference type="ChEBI" id="CHEBI:78442"/>
        <dbReference type="ChEBI" id="CHEBI:78537"/>
        <dbReference type="ChEBI" id="CHEBI:456215"/>
        <dbReference type="EC" id="6.1.1.9"/>
    </reaction>
</comment>
<comment type="subunit">
    <text evidence="1">Monomer.</text>
</comment>
<comment type="subcellular location">
    <subcellularLocation>
        <location evidence="1">Cytoplasm</location>
    </subcellularLocation>
</comment>
<comment type="domain">
    <text evidence="1">ValRS has two distinct active sites: one for aminoacylation and one for editing. The misactivated threonine is translocated from the active site to the editing site.</text>
</comment>
<comment type="domain">
    <text evidence="1">The C-terminal coiled-coil domain is crucial for aminoacylation activity.</text>
</comment>
<comment type="similarity">
    <text evidence="1">Belongs to the class-I aminoacyl-tRNA synthetase family. ValS type 1 subfamily.</text>
</comment>
<proteinExistence type="inferred from homology"/>
<dbReference type="EC" id="6.1.1.9" evidence="1"/>
<dbReference type="EMBL" id="AE016823">
    <property type="protein sequence ID" value="AAS69094.1"/>
    <property type="molecule type" value="Genomic_DNA"/>
</dbReference>
<dbReference type="RefSeq" id="WP_000744009.1">
    <property type="nucleotide sequence ID" value="NC_005823.1"/>
</dbReference>
<dbReference type="SMR" id="Q72V30"/>
<dbReference type="KEGG" id="lic:LIC_10473"/>
<dbReference type="HOGENOM" id="CLU_001493_0_2_12"/>
<dbReference type="Proteomes" id="UP000007037">
    <property type="component" value="Chromosome I"/>
</dbReference>
<dbReference type="GO" id="GO:0005829">
    <property type="term" value="C:cytosol"/>
    <property type="evidence" value="ECO:0007669"/>
    <property type="project" value="TreeGrafter"/>
</dbReference>
<dbReference type="GO" id="GO:0002161">
    <property type="term" value="F:aminoacyl-tRNA deacylase activity"/>
    <property type="evidence" value="ECO:0007669"/>
    <property type="project" value="InterPro"/>
</dbReference>
<dbReference type="GO" id="GO:0005524">
    <property type="term" value="F:ATP binding"/>
    <property type="evidence" value="ECO:0007669"/>
    <property type="project" value="UniProtKB-UniRule"/>
</dbReference>
<dbReference type="GO" id="GO:0004832">
    <property type="term" value="F:valine-tRNA ligase activity"/>
    <property type="evidence" value="ECO:0007669"/>
    <property type="project" value="UniProtKB-UniRule"/>
</dbReference>
<dbReference type="GO" id="GO:0006438">
    <property type="term" value="P:valyl-tRNA aminoacylation"/>
    <property type="evidence" value="ECO:0007669"/>
    <property type="project" value="UniProtKB-UniRule"/>
</dbReference>
<dbReference type="CDD" id="cd07962">
    <property type="entry name" value="Anticodon_Ia_Val"/>
    <property type="match status" value="1"/>
</dbReference>
<dbReference type="CDD" id="cd00817">
    <property type="entry name" value="ValRS_core"/>
    <property type="match status" value="1"/>
</dbReference>
<dbReference type="FunFam" id="1.10.287.380:FF:000001">
    <property type="entry name" value="Valine--tRNA ligase"/>
    <property type="match status" value="1"/>
</dbReference>
<dbReference type="FunFam" id="3.40.50.620:FF:000098">
    <property type="entry name" value="Valine--tRNA ligase"/>
    <property type="match status" value="1"/>
</dbReference>
<dbReference type="FunFam" id="3.40.50.620:FF:000020">
    <property type="entry name" value="Valine--tRNA ligase, mitochondrial"/>
    <property type="match status" value="1"/>
</dbReference>
<dbReference type="Gene3D" id="3.40.50.620">
    <property type="entry name" value="HUPs"/>
    <property type="match status" value="2"/>
</dbReference>
<dbReference type="Gene3D" id="1.10.730.10">
    <property type="entry name" value="Isoleucyl-tRNA Synthetase, Domain 1"/>
    <property type="match status" value="1"/>
</dbReference>
<dbReference type="Gene3D" id="1.10.287.380">
    <property type="entry name" value="Valyl-tRNA synthetase, C-terminal domain"/>
    <property type="match status" value="1"/>
</dbReference>
<dbReference type="HAMAP" id="MF_02004">
    <property type="entry name" value="Val_tRNA_synth_type1"/>
    <property type="match status" value="1"/>
</dbReference>
<dbReference type="InterPro" id="IPR001412">
    <property type="entry name" value="aa-tRNA-synth_I_CS"/>
</dbReference>
<dbReference type="InterPro" id="IPR002300">
    <property type="entry name" value="aa-tRNA-synth_Ia"/>
</dbReference>
<dbReference type="InterPro" id="IPR033705">
    <property type="entry name" value="Anticodon_Ia_Val"/>
</dbReference>
<dbReference type="InterPro" id="IPR013155">
    <property type="entry name" value="M/V/L/I-tRNA-synth_anticd-bd"/>
</dbReference>
<dbReference type="InterPro" id="IPR014729">
    <property type="entry name" value="Rossmann-like_a/b/a_fold"/>
</dbReference>
<dbReference type="InterPro" id="IPR010978">
    <property type="entry name" value="tRNA-bd_arm"/>
</dbReference>
<dbReference type="InterPro" id="IPR009080">
    <property type="entry name" value="tRNAsynth_Ia_anticodon-bd"/>
</dbReference>
<dbReference type="InterPro" id="IPR037118">
    <property type="entry name" value="Val-tRNA_synth_C_sf"/>
</dbReference>
<dbReference type="InterPro" id="IPR019499">
    <property type="entry name" value="Val-tRNA_synth_tRNA-bd"/>
</dbReference>
<dbReference type="InterPro" id="IPR009008">
    <property type="entry name" value="Val/Leu/Ile-tRNA-synth_edit"/>
</dbReference>
<dbReference type="InterPro" id="IPR002303">
    <property type="entry name" value="Valyl-tRNA_ligase"/>
</dbReference>
<dbReference type="NCBIfam" id="NF004349">
    <property type="entry name" value="PRK05729.1"/>
    <property type="match status" value="1"/>
</dbReference>
<dbReference type="NCBIfam" id="TIGR00422">
    <property type="entry name" value="valS"/>
    <property type="match status" value="1"/>
</dbReference>
<dbReference type="PANTHER" id="PTHR11946:SF93">
    <property type="entry name" value="VALINE--TRNA LIGASE, CHLOROPLASTIC_MITOCHONDRIAL 2"/>
    <property type="match status" value="1"/>
</dbReference>
<dbReference type="PANTHER" id="PTHR11946">
    <property type="entry name" value="VALYL-TRNA SYNTHETASES"/>
    <property type="match status" value="1"/>
</dbReference>
<dbReference type="Pfam" id="PF08264">
    <property type="entry name" value="Anticodon_1"/>
    <property type="match status" value="1"/>
</dbReference>
<dbReference type="Pfam" id="PF00133">
    <property type="entry name" value="tRNA-synt_1"/>
    <property type="match status" value="1"/>
</dbReference>
<dbReference type="Pfam" id="PF10458">
    <property type="entry name" value="Val_tRNA-synt_C"/>
    <property type="match status" value="1"/>
</dbReference>
<dbReference type="PRINTS" id="PR00986">
    <property type="entry name" value="TRNASYNTHVAL"/>
</dbReference>
<dbReference type="SUPFAM" id="SSF47323">
    <property type="entry name" value="Anticodon-binding domain of a subclass of class I aminoacyl-tRNA synthetases"/>
    <property type="match status" value="1"/>
</dbReference>
<dbReference type="SUPFAM" id="SSF52374">
    <property type="entry name" value="Nucleotidylyl transferase"/>
    <property type="match status" value="1"/>
</dbReference>
<dbReference type="SUPFAM" id="SSF46589">
    <property type="entry name" value="tRNA-binding arm"/>
    <property type="match status" value="1"/>
</dbReference>
<dbReference type="SUPFAM" id="SSF50677">
    <property type="entry name" value="ValRS/IleRS/LeuRS editing domain"/>
    <property type="match status" value="1"/>
</dbReference>
<dbReference type="PROSITE" id="PS00178">
    <property type="entry name" value="AA_TRNA_LIGASE_I"/>
    <property type="match status" value="1"/>
</dbReference>
<organism>
    <name type="scientific">Leptospira interrogans serogroup Icterohaemorrhagiae serovar copenhageni (strain Fiocruz L1-130)</name>
    <dbReference type="NCBI Taxonomy" id="267671"/>
    <lineage>
        <taxon>Bacteria</taxon>
        <taxon>Pseudomonadati</taxon>
        <taxon>Spirochaetota</taxon>
        <taxon>Spirochaetia</taxon>
        <taxon>Leptospirales</taxon>
        <taxon>Leptospiraceae</taxon>
        <taxon>Leptospira</taxon>
    </lineage>
</organism>
<name>SYV_LEPIC</name>
<sequence length="882" mass="101029">MKKQIGDRYEPKDVENKWISLWEKKKSFAPNSNARESFSIVIPPPNVTGSLHIGHALNHTIQDILVRIERKKGKSTLWLPGMDHAGIATQMVVERELAKESKKRTDFTREEFIHKVWEWKNHSGGMITKQQKLLGESVDWSRERFTLDEGLSKAVFKVFKSLYDEGLIYRGERIINWCPASQTAISDLEVEFRETKGKLYHIKYPIHGKKDQFLVVATTRPETMLGDVAVCANPEDERYTSLKDVVLDLPLTNRQIPLLFDSFVDKEFGSGLVKITPAHDANDFEAGQRLGLKPLLVMNPNGTMNENAGIYQGLDRFEARKKVLADLEAKGLIEKIEDHIHAVGHNSRGGAVIEPYLSTQWFVKIKPLADLAVQAVQSGQVEFIPKMWEKTFFEWMNNIRDWCISRQLWWGHRIPAYHCKKCKHFEVSETAVTVCTSCGSQEVEPDPDVLDTWFSSQLWPFSTLGWPDQTEDLKRYYPTSVLVTGFDIIFFWVSRMIMMGMKFMQAPPFHKVLIHGLVRDKDGKKFSKSVGNVIDPLVMMDKYGTDSFRFFLAATLPEGKDILFDESRLDGYRSFCNKIWNSSRFILMNLEESFVPIGITPDIEKDLEPMDQWILSRFNHCLEEYNKAHSKFHFYEMAAAIYEFIWGDFCDWYIELVKPRAYGKVSPRSAEVAKQVLSDVLIRALGLLHPFMPFLTEEVHSVFSDQYIVTTPFPESYPVASDSLGVQKLNLLQEIVTKIRVMRSENGVAPDKKCKVIVKSSDNLSSSTILENEVSLLQLARLESIRIDTLYEIQKTDSVSHFTKGEIVLPLEGLIDVAKEKARLEKELQKSELEKEKLEIKLSNPGFLSKAAPEVVEKERDKLKTLIDKVEVLKKGIQNLAG</sequence>
<accession>Q72V30</accession>
<feature type="chain" id="PRO_0000224498" description="Valine--tRNA ligase">
    <location>
        <begin position="1"/>
        <end position="882"/>
    </location>
</feature>
<feature type="coiled-coil region" evidence="1">
    <location>
        <begin position="812"/>
        <end position="881"/>
    </location>
</feature>
<feature type="short sequence motif" description="'HIGH' region">
    <location>
        <begin position="45"/>
        <end position="55"/>
    </location>
</feature>
<feature type="short sequence motif" description="'KMSKS' region">
    <location>
        <begin position="525"/>
        <end position="529"/>
    </location>
</feature>
<feature type="binding site" evidence="1">
    <location>
        <position position="528"/>
    </location>
    <ligand>
        <name>ATP</name>
        <dbReference type="ChEBI" id="CHEBI:30616"/>
    </ligand>
</feature>
<evidence type="ECO:0000255" key="1">
    <source>
        <dbReference type="HAMAP-Rule" id="MF_02004"/>
    </source>
</evidence>
<protein>
    <recommendedName>
        <fullName evidence="1">Valine--tRNA ligase</fullName>
        <ecNumber evidence="1">6.1.1.9</ecNumber>
    </recommendedName>
    <alternativeName>
        <fullName evidence="1">Valyl-tRNA synthetase</fullName>
        <shortName evidence="1">ValRS</shortName>
    </alternativeName>
</protein>
<keyword id="KW-0030">Aminoacyl-tRNA synthetase</keyword>
<keyword id="KW-0067">ATP-binding</keyword>
<keyword id="KW-0175">Coiled coil</keyword>
<keyword id="KW-0963">Cytoplasm</keyword>
<keyword id="KW-0436">Ligase</keyword>
<keyword id="KW-0547">Nucleotide-binding</keyword>
<keyword id="KW-0648">Protein biosynthesis</keyword>
<reference key="1">
    <citation type="journal article" date="2004" name="J. Bacteriol.">
        <title>Comparative genomics of two Leptospira interrogans serovars reveals novel insights into physiology and pathogenesis.</title>
        <authorList>
            <person name="Nascimento A.L.T.O."/>
            <person name="Ko A.I."/>
            <person name="Martins E.A.L."/>
            <person name="Monteiro-Vitorello C.B."/>
            <person name="Ho P.L."/>
            <person name="Haake D.A."/>
            <person name="Verjovski-Almeida S."/>
            <person name="Hartskeerl R.A."/>
            <person name="Marques M.V."/>
            <person name="Oliveira M.C."/>
            <person name="Menck C.F.M."/>
            <person name="Leite L.C.C."/>
            <person name="Carrer H."/>
            <person name="Coutinho L.L."/>
            <person name="Degrave W.M."/>
            <person name="Dellagostin O.A."/>
            <person name="El-Dorry H."/>
            <person name="Ferro E.S."/>
            <person name="Ferro M.I.T."/>
            <person name="Furlan L.R."/>
            <person name="Gamberini M."/>
            <person name="Giglioti E.A."/>
            <person name="Goes-Neto A."/>
            <person name="Goldman G.H."/>
            <person name="Goldman M.H.S."/>
            <person name="Harakava R."/>
            <person name="Jeronimo S.M.B."/>
            <person name="Junqueira-de-Azevedo I.L.M."/>
            <person name="Kimura E.T."/>
            <person name="Kuramae E.E."/>
            <person name="Lemos E.G.M."/>
            <person name="Lemos M.V.F."/>
            <person name="Marino C.L."/>
            <person name="Nunes L.R."/>
            <person name="de Oliveira R.C."/>
            <person name="Pereira G.G."/>
            <person name="Reis M.S."/>
            <person name="Schriefer A."/>
            <person name="Siqueira W.J."/>
            <person name="Sommer P."/>
            <person name="Tsai S.M."/>
            <person name="Simpson A.J.G."/>
            <person name="Ferro J.A."/>
            <person name="Camargo L.E.A."/>
            <person name="Kitajima J.P."/>
            <person name="Setubal J.C."/>
            <person name="Van Sluys M.A."/>
        </authorList>
    </citation>
    <scope>NUCLEOTIDE SEQUENCE [LARGE SCALE GENOMIC DNA]</scope>
    <source>
        <strain>Fiocruz L1-130</strain>
    </source>
</reference>
<gene>
    <name evidence="1" type="primary">valS</name>
    <name type="ordered locus">LIC_10473</name>
</gene>